<reference evidence="7" key="1">
    <citation type="submission" date="2003-07" db="EMBL/GenBank/DDBJ databases">
        <title>Molecular cloning and functional characterization of a novel subclass of junctophilins in the brain.</title>
        <authorList>
            <person name="Savaskan N.E."/>
            <person name="Brauer A.U."/>
        </authorList>
    </citation>
    <scope>NUCLEOTIDE SEQUENCE [MRNA]</scope>
    <source>
        <strain evidence="7">Wistar</strain>
        <tissue evidence="7">Brain</tissue>
    </source>
</reference>
<sequence>MHVPLGRKFDFDDGGCYVGGWEAGRAHGYGVCTGPGAQGEYSGCWAHGFESLGVFTGPGGHSYQGHWQQGKREGLGVERKSRWTYRGEWLGGLKGRSGVWESVSGLRYAGLWKDGFQDGYGTETYSDGGTYQGQWQAGKRHGYGVRQSVPYHQAALLRSPRRTSLDSGHSDPPTPPPPLPLPGDEGGSPASGSRGGFVLAGPGDADGASSRKRTPAAGGFFRRSLLLSGLRAGGRRSSLGSKRGSLRSEVSSEVGSTGPPGSEASGPPIPAPPALIEGSATEVYAGEWRADRRSGYGVSQRSNGLRYEGEWLGNRRHGYGRTTRPDGSREEGKYKRNRLVHGGRVRSLLPLALRRGKVKEKVDRAVEGARRAVSAARQRQEIAAARAADALLKAVAASSVAEKAVEAARMAKLIAQDLQPMLEAPGRRPRQDSGGSDTEPLDEDSPGVYENGLTPSEGSPELPSSPASSHQPWRAPPCRSPLPPGGNWGPFSSPKAWPEEWGGPGEQAEELAGYEAEDEAGMQGPGPRDGSPLLGGCSDSSGSLREEEGEDEESLPQLRAPGGSESEPVTTPVLRGLSSRGPDAGCLTEEFEEPAATERPAQPGAANPLVVGAVALLDLSLAFLFSQLLT</sequence>
<accession>Q69FB3</accession>
<dbReference type="EMBL" id="AY341260">
    <property type="protein sequence ID" value="AAR08902.1"/>
    <property type="molecule type" value="mRNA"/>
</dbReference>
<dbReference type="RefSeq" id="NP_001003711.1">
    <property type="nucleotide sequence ID" value="NM_001003711.1"/>
</dbReference>
<dbReference type="SMR" id="Q69FB3"/>
<dbReference type="BioGRID" id="268735">
    <property type="interactions" value="1"/>
</dbReference>
<dbReference type="FunCoup" id="Q69FB3">
    <property type="interactions" value="980"/>
</dbReference>
<dbReference type="STRING" id="10116.ENSRNOP00000034702"/>
<dbReference type="GlyGen" id="Q69FB3">
    <property type="glycosylation" value="1 site"/>
</dbReference>
<dbReference type="PhosphoSitePlus" id="Q69FB3"/>
<dbReference type="PaxDb" id="10116-ENSRNOP00000034702"/>
<dbReference type="GeneID" id="445271"/>
<dbReference type="KEGG" id="rno:445271"/>
<dbReference type="UCSC" id="RGD:1303170">
    <property type="organism name" value="rat"/>
</dbReference>
<dbReference type="AGR" id="RGD:1303170"/>
<dbReference type="CTD" id="84502"/>
<dbReference type="RGD" id="1303170">
    <property type="gene designation" value="Jph4"/>
</dbReference>
<dbReference type="eggNOG" id="KOG0231">
    <property type="taxonomic scope" value="Eukaryota"/>
</dbReference>
<dbReference type="InParanoid" id="Q69FB3"/>
<dbReference type="PhylomeDB" id="Q69FB3"/>
<dbReference type="TreeFam" id="TF317210"/>
<dbReference type="PRO" id="PR:Q69FB3"/>
<dbReference type="Proteomes" id="UP000002494">
    <property type="component" value="Unplaced"/>
</dbReference>
<dbReference type="GO" id="GO:0043198">
    <property type="term" value="C:dendritic shaft"/>
    <property type="evidence" value="ECO:0000266"/>
    <property type="project" value="RGD"/>
</dbReference>
<dbReference type="GO" id="GO:0005789">
    <property type="term" value="C:endoplasmic reticulum membrane"/>
    <property type="evidence" value="ECO:0000318"/>
    <property type="project" value="GO_Central"/>
</dbReference>
<dbReference type="GO" id="GO:0030314">
    <property type="term" value="C:junctional membrane complex"/>
    <property type="evidence" value="ECO:0000318"/>
    <property type="project" value="GO_Central"/>
</dbReference>
<dbReference type="GO" id="GO:0005886">
    <property type="term" value="C:plasma membrane"/>
    <property type="evidence" value="ECO:0000318"/>
    <property type="project" value="GO_Central"/>
</dbReference>
<dbReference type="GO" id="GO:0005790">
    <property type="term" value="C:smooth endoplasmic reticulum"/>
    <property type="evidence" value="ECO:0000266"/>
    <property type="project" value="RGD"/>
</dbReference>
<dbReference type="GO" id="GO:0007612">
    <property type="term" value="P:learning"/>
    <property type="evidence" value="ECO:0000266"/>
    <property type="project" value="RGD"/>
</dbReference>
<dbReference type="GO" id="GO:0050885">
    <property type="term" value="P:neuromuscular process controlling balance"/>
    <property type="evidence" value="ECO:0000266"/>
    <property type="project" value="RGD"/>
</dbReference>
<dbReference type="GO" id="GO:0001817">
    <property type="term" value="P:regulation of cytokine production"/>
    <property type="evidence" value="ECO:0000266"/>
    <property type="project" value="RGD"/>
</dbReference>
<dbReference type="GO" id="GO:2001256">
    <property type="term" value="P:regulation of store-operated calcium entry"/>
    <property type="evidence" value="ECO:0000266"/>
    <property type="project" value="RGD"/>
</dbReference>
<dbReference type="GO" id="GO:0048167">
    <property type="term" value="P:regulation of synaptic plasticity"/>
    <property type="evidence" value="ECO:0000266"/>
    <property type="project" value="RGD"/>
</dbReference>
<dbReference type="FunFam" id="2.20.110.10:FF:000003">
    <property type="entry name" value="Junctophilin"/>
    <property type="match status" value="1"/>
</dbReference>
<dbReference type="FunFam" id="2.20.110.10:FF:000008">
    <property type="entry name" value="Junctophilin"/>
    <property type="match status" value="1"/>
</dbReference>
<dbReference type="Gene3D" id="2.20.110.10">
    <property type="entry name" value="Histone H3 K4-specific methyltransferase SET7/9 N-terminal domain"/>
    <property type="match status" value="2"/>
</dbReference>
<dbReference type="InterPro" id="IPR017191">
    <property type="entry name" value="Junctophilin"/>
</dbReference>
<dbReference type="InterPro" id="IPR003409">
    <property type="entry name" value="MORN"/>
</dbReference>
<dbReference type="PANTHER" id="PTHR23085">
    <property type="entry name" value="GH28348P"/>
    <property type="match status" value="1"/>
</dbReference>
<dbReference type="PANTHER" id="PTHR23085:SF14">
    <property type="entry name" value="JUNCTOPHILIN-4"/>
    <property type="match status" value="1"/>
</dbReference>
<dbReference type="Pfam" id="PF02493">
    <property type="entry name" value="MORN"/>
    <property type="match status" value="8"/>
</dbReference>
<dbReference type="PIRSF" id="PIRSF037387">
    <property type="entry name" value="Junctophilin"/>
    <property type="match status" value="1"/>
</dbReference>
<dbReference type="SMART" id="SM00698">
    <property type="entry name" value="MORN"/>
    <property type="match status" value="6"/>
</dbReference>
<dbReference type="SUPFAM" id="SSF82185">
    <property type="entry name" value="Histone H3 K4-specific methyltransferase SET7/9 N-terminal domain"/>
    <property type="match status" value="3"/>
</dbReference>
<keyword id="KW-1003">Cell membrane</keyword>
<keyword id="KW-0256">Endoplasmic reticulum</keyword>
<keyword id="KW-0472">Membrane</keyword>
<keyword id="KW-1185">Reference proteome</keyword>
<keyword id="KW-0677">Repeat</keyword>
<keyword id="KW-0812">Transmembrane</keyword>
<keyword id="KW-1133">Transmembrane helix</keyword>
<gene>
    <name evidence="8" type="primary">Jph4</name>
    <name evidence="2" type="synonym">Jphl1</name>
</gene>
<organism>
    <name type="scientific">Rattus norvegicus</name>
    <name type="common">Rat</name>
    <dbReference type="NCBI Taxonomy" id="10116"/>
    <lineage>
        <taxon>Eukaryota</taxon>
        <taxon>Metazoa</taxon>
        <taxon>Chordata</taxon>
        <taxon>Craniata</taxon>
        <taxon>Vertebrata</taxon>
        <taxon>Euteleostomi</taxon>
        <taxon>Mammalia</taxon>
        <taxon>Eutheria</taxon>
        <taxon>Euarchontoglires</taxon>
        <taxon>Glires</taxon>
        <taxon>Rodentia</taxon>
        <taxon>Myomorpha</taxon>
        <taxon>Muroidea</taxon>
        <taxon>Muridae</taxon>
        <taxon>Murinae</taxon>
        <taxon>Rattus</taxon>
    </lineage>
</organism>
<evidence type="ECO:0000250" key="1"/>
<evidence type="ECO:0000250" key="2">
    <source>
        <dbReference type="UniProtKB" id="Q96JJ6"/>
    </source>
</evidence>
<evidence type="ECO:0000250" key="3">
    <source>
        <dbReference type="UniProtKB" id="Q9ET77"/>
    </source>
</evidence>
<evidence type="ECO:0000250" key="4">
    <source>
        <dbReference type="UniProtKB" id="Q9GKY7"/>
    </source>
</evidence>
<evidence type="ECO:0000255" key="5"/>
<evidence type="ECO:0000256" key="6">
    <source>
        <dbReference type="SAM" id="MobiDB-lite"/>
    </source>
</evidence>
<evidence type="ECO:0000312" key="7">
    <source>
        <dbReference type="EMBL" id="AAR08902.1"/>
    </source>
</evidence>
<evidence type="ECO:0000312" key="8">
    <source>
        <dbReference type="RGD" id="1303170"/>
    </source>
</evidence>
<protein>
    <recommendedName>
        <fullName>Junctophilin-4</fullName>
        <shortName>JP-4</shortName>
    </recommendedName>
    <alternativeName>
        <fullName>Junctophilin-like 1 protein</fullName>
    </alternativeName>
</protein>
<feature type="chain" id="PRO_0000259404" description="Junctophilin-4">
    <location>
        <begin position="1"/>
        <end position="630"/>
    </location>
</feature>
<feature type="topological domain" description="Cytoplasmic" evidence="5">
    <location>
        <begin position="1"/>
        <end position="608"/>
    </location>
</feature>
<feature type="transmembrane region" description="Helical" evidence="5">
    <location>
        <begin position="609"/>
        <end position="629"/>
    </location>
</feature>
<feature type="repeat" description="MORN 1" evidence="5">
    <location>
        <begin position="17"/>
        <end position="39"/>
    </location>
</feature>
<feature type="repeat" description="MORN 2" evidence="5">
    <location>
        <begin position="41"/>
        <end position="62"/>
    </location>
</feature>
<feature type="repeat" description="MORN 3" evidence="5">
    <location>
        <begin position="63"/>
        <end position="84"/>
    </location>
</feature>
<feature type="repeat" description="MORN 4" evidence="5">
    <location>
        <begin position="85"/>
        <end position="107"/>
    </location>
</feature>
<feature type="repeat" description="MORN 5" evidence="5">
    <location>
        <begin position="108"/>
        <end position="130"/>
    </location>
</feature>
<feature type="repeat" description="MORN 6" evidence="5">
    <location>
        <begin position="131"/>
        <end position="153"/>
    </location>
</feature>
<feature type="repeat" description="MORN 7" evidence="5">
    <location>
        <begin position="284"/>
        <end position="306"/>
    </location>
</feature>
<feature type="repeat" description="MORN 8" evidence="5">
    <location>
        <begin position="307"/>
        <end position="329"/>
    </location>
</feature>
<feature type="region of interest" description="Disordered" evidence="6">
    <location>
        <begin position="160"/>
        <end position="216"/>
    </location>
</feature>
<feature type="region of interest" description="Disordered" evidence="6">
    <location>
        <begin position="233"/>
        <end position="278"/>
    </location>
</feature>
<feature type="region of interest" description="Disordered" evidence="6">
    <location>
        <begin position="420"/>
        <end position="604"/>
    </location>
</feature>
<feature type="compositionally biased region" description="Pro residues" evidence="6">
    <location>
        <begin position="172"/>
        <end position="181"/>
    </location>
</feature>
<feature type="compositionally biased region" description="Low complexity" evidence="6">
    <location>
        <begin position="233"/>
        <end position="243"/>
    </location>
</feature>
<feature type="compositionally biased region" description="Low complexity" evidence="6">
    <location>
        <begin position="455"/>
        <end position="469"/>
    </location>
</feature>
<feature type="compositionally biased region" description="Pro residues" evidence="6">
    <location>
        <begin position="474"/>
        <end position="484"/>
    </location>
</feature>
<feature type="compositionally biased region" description="Low complexity" evidence="6">
    <location>
        <begin position="530"/>
        <end position="543"/>
    </location>
</feature>
<comment type="function">
    <text evidence="1">Junctophilins contribute to the formation of junctional membrane complexes (JMCs) which link the plasma membrane with the endoplasmic or sarcoplasmic reticulum in excitable cells. Provides a structural foundation for functional cross-talk between the cell surface and intracellular calcium release channels. JPH4 is brain-specific and appears to have an active role in certain neurons involved in motor coordination and memory (By similarity).</text>
</comment>
<comment type="subcellular location">
    <subcellularLocation>
        <location evidence="1">Cell membrane</location>
        <topology evidence="1">Peripheral membrane protein</topology>
    </subcellularLocation>
    <subcellularLocation>
        <location evidence="1">Endoplasmic reticulum membrane</location>
        <topology evidence="3">Single-pass type IV membrane protein</topology>
    </subcellularLocation>
    <text evidence="1">Localized predominantly on the plasma membrane. The transmembrane domain is anchored in endoplasmic reticulum membrane, while the N-terminal part associates with the plasma membrane (By similarity).</text>
</comment>
<comment type="domain">
    <text evidence="4">The MORN (membrane occupation and recognition nexus) repeats contribute to the plasma membrane binding, possibly by interacting with phospholipids.</text>
</comment>
<comment type="similarity">
    <text evidence="5">Belongs to the junctophilin family.</text>
</comment>
<proteinExistence type="evidence at transcript level"/>
<name>JPH4_RAT</name>